<gene>
    <name type="primary">END3</name>
    <name type="ORF">PICST_50269</name>
</gene>
<keyword id="KW-0009">Actin-binding</keyword>
<keyword id="KW-0106">Calcium</keyword>
<keyword id="KW-1003">Cell membrane</keyword>
<keyword id="KW-0175">Coiled coil</keyword>
<keyword id="KW-0963">Cytoplasm</keyword>
<keyword id="KW-0206">Cytoskeleton</keyword>
<keyword id="KW-0254">Endocytosis</keyword>
<keyword id="KW-0967">Endosome</keyword>
<keyword id="KW-0472">Membrane</keyword>
<keyword id="KW-0479">Metal-binding</keyword>
<keyword id="KW-1185">Reference proteome</keyword>
<keyword id="KW-0677">Repeat</keyword>
<evidence type="ECO:0000250" key="1"/>
<evidence type="ECO:0000255" key="2"/>
<evidence type="ECO:0000255" key="3">
    <source>
        <dbReference type="PROSITE-ProRule" id="PRU00077"/>
    </source>
</evidence>
<evidence type="ECO:0000255" key="4">
    <source>
        <dbReference type="PROSITE-ProRule" id="PRU00448"/>
    </source>
</evidence>
<evidence type="ECO:0000305" key="5"/>
<comment type="function">
    <text evidence="1">Component of the PAN1 actin cytoskeleton-regulatory complex required for the internalization of endosomes during actin-coupled endocytosis. The complex links the site of endocytosis to the cell membrane-associated actin cytoskeleton. Mediates uptake of external molecules and vacuolar degradation of plasma membrane proteins. Plays a role in the proper organization of the cell membrane-associated actin cytoskeleton and promotes its destabilization (By similarity).</text>
</comment>
<comment type="subunit">
    <text evidence="1">Component of the PAN1 actin cytoskeleton-regulatory complex.</text>
</comment>
<comment type="subcellular location">
    <subcellularLocation>
        <location evidence="1">Cell membrane</location>
        <topology evidence="1">Peripheral membrane protein</topology>
        <orientation evidence="1">Cytoplasmic side</orientation>
    </subcellularLocation>
    <subcellularLocation>
        <location evidence="1">Endosome membrane</location>
        <topology evidence="1">Peripheral membrane protein</topology>
        <orientation evidence="1">Cytoplasmic side</orientation>
    </subcellularLocation>
    <subcellularLocation>
        <location evidence="1">Cytoplasm</location>
        <location evidence="1">Cytoskeleton</location>
        <location evidence="1">Actin patch</location>
    </subcellularLocation>
    <text evidence="1">Cytoplasmic and cortical actin patches.</text>
</comment>
<comment type="similarity">
    <text evidence="5">Belongs to the END3 family.</text>
</comment>
<reference key="1">
    <citation type="journal article" date="2007" name="Nat. Biotechnol.">
        <title>Genome sequence of the lignocellulose-bioconverting and xylose-fermenting yeast Pichia stipitis.</title>
        <authorList>
            <person name="Jeffries T.W."/>
            <person name="Grigoriev I.V."/>
            <person name="Grimwood J."/>
            <person name="Laplaza J.M."/>
            <person name="Aerts A."/>
            <person name="Salamov A."/>
            <person name="Schmutz J."/>
            <person name="Lindquist E."/>
            <person name="Dehal P."/>
            <person name="Shapiro H."/>
            <person name="Jin Y.-S."/>
            <person name="Passoth V."/>
            <person name="Richardson P.M."/>
        </authorList>
    </citation>
    <scope>NUCLEOTIDE SEQUENCE [LARGE SCALE GENOMIC DNA]</scope>
    <source>
        <strain>ATCC 58785 / CBS 6054 / NBRC 10063 / NRRL Y-11545</strain>
    </source>
</reference>
<protein>
    <recommendedName>
        <fullName>Actin cytoskeleton-regulatory complex protein END3</fullName>
    </recommendedName>
    <alternativeName>
        <fullName>Endocytosis protein 3</fullName>
    </alternativeName>
</protein>
<feature type="chain" id="PRO_0000349455" description="Actin cytoskeleton-regulatory complex protein END3">
    <location>
        <begin position="1"/>
        <end position="381"/>
    </location>
</feature>
<feature type="domain" description="EH 1" evidence="3">
    <location>
        <begin position="8"/>
        <end position="98"/>
    </location>
</feature>
<feature type="domain" description="EF-hand" evidence="4">
    <location>
        <begin position="40"/>
        <end position="75"/>
    </location>
</feature>
<feature type="domain" description="EH 2" evidence="3">
    <location>
        <begin position="135"/>
        <end position="224"/>
    </location>
</feature>
<feature type="coiled-coil region" evidence="2">
    <location>
        <begin position="278"/>
        <end position="381"/>
    </location>
</feature>
<feature type="binding site" evidence="4">
    <location>
        <position position="53"/>
    </location>
    <ligand>
        <name>Ca(2+)</name>
        <dbReference type="ChEBI" id="CHEBI:29108"/>
    </ligand>
</feature>
<feature type="binding site" evidence="4">
    <location>
        <position position="55"/>
    </location>
    <ligand>
        <name>Ca(2+)</name>
        <dbReference type="ChEBI" id="CHEBI:29108"/>
    </ligand>
</feature>
<feature type="binding site" evidence="4">
    <location>
        <position position="57"/>
    </location>
    <ligand>
        <name>Ca(2+)</name>
        <dbReference type="ChEBI" id="CHEBI:29108"/>
    </ligand>
</feature>
<feature type="binding site" evidence="4">
    <location>
        <position position="59"/>
    </location>
    <ligand>
        <name>Ca(2+)</name>
        <dbReference type="ChEBI" id="CHEBI:29108"/>
    </ligand>
</feature>
<feature type="binding site" evidence="4">
    <location>
        <position position="64"/>
    </location>
    <ligand>
        <name>Ca(2+)</name>
        <dbReference type="ChEBI" id="CHEBI:29108"/>
    </ligand>
</feature>
<name>END3_PICST</name>
<sequence>MPRLEDWEIKKYWEIFQGLDPVNKKLTGDKVAPVLKNSRLQDDQLAKIWELSDIDSDGKLDFEEFCITMRLIFDMVNGVSTAIPKELPSWLIPSSKAHLIQANNAVRSNSNQGFDYEDDEDGLSDDFDWYISPTDKATYETIYNSNSDSYGRVKFESLNSLYSSLSKVPKSDISSAWNLVNPKSFETIDKDQVLVFLHILNQRENGKRIPRGVPASLRATFSKEVPNYDLNSVQAKPQPSVGTGRKSFANDYLNKIGQANTITERGTDFSSTEGTDWEEVRLRRELTDLENLLHKIQNGNKNDNSNTNDDSALLKYEYEQLLKYKQNKLSSANLSTKSKDLTEVKGDLDLIQSQVSTLEDFLKSKSSELEKLNEEIRSLKA</sequence>
<accession>A3M008</accession>
<organism>
    <name type="scientific">Scheffersomyces stipitis (strain ATCC 58785 / CBS 6054 / NBRC 10063 / NRRL Y-11545)</name>
    <name type="common">Yeast</name>
    <name type="synonym">Pichia stipitis</name>
    <dbReference type="NCBI Taxonomy" id="322104"/>
    <lineage>
        <taxon>Eukaryota</taxon>
        <taxon>Fungi</taxon>
        <taxon>Dikarya</taxon>
        <taxon>Ascomycota</taxon>
        <taxon>Saccharomycotina</taxon>
        <taxon>Pichiomycetes</taxon>
        <taxon>Debaryomycetaceae</taxon>
        <taxon>Scheffersomyces</taxon>
    </lineage>
</organism>
<proteinExistence type="inferred from homology"/>
<dbReference type="EMBL" id="CP000502">
    <property type="protein sequence ID" value="ABN68632.2"/>
    <property type="molecule type" value="Genomic_DNA"/>
</dbReference>
<dbReference type="RefSeq" id="XP_001386661.2">
    <property type="nucleotide sequence ID" value="XM_001386624.1"/>
</dbReference>
<dbReference type="FunCoup" id="A3M008">
    <property type="interactions" value="121"/>
</dbReference>
<dbReference type="STRING" id="322104.A3M008"/>
<dbReference type="GeneID" id="4840868"/>
<dbReference type="KEGG" id="pic:PICST_50269"/>
<dbReference type="eggNOG" id="KOG0998">
    <property type="taxonomic scope" value="Eukaryota"/>
</dbReference>
<dbReference type="HOGENOM" id="CLU_040829_0_0_1"/>
<dbReference type="InParanoid" id="A3M008"/>
<dbReference type="OMA" id="DWLIPES"/>
<dbReference type="OrthoDB" id="1716625at2759"/>
<dbReference type="Proteomes" id="UP000002258">
    <property type="component" value="Chromosome 8"/>
</dbReference>
<dbReference type="GO" id="GO:0030479">
    <property type="term" value="C:actin cortical patch"/>
    <property type="evidence" value="ECO:0007669"/>
    <property type="project" value="UniProtKB-SubCell"/>
</dbReference>
<dbReference type="GO" id="GO:1990964">
    <property type="term" value="C:actin cytoskeleton-regulatory complex"/>
    <property type="evidence" value="ECO:0007669"/>
    <property type="project" value="EnsemblFungi"/>
</dbReference>
<dbReference type="GO" id="GO:0010008">
    <property type="term" value="C:endosome membrane"/>
    <property type="evidence" value="ECO:0007669"/>
    <property type="project" value="UniProtKB-SubCell"/>
</dbReference>
<dbReference type="GO" id="GO:0005886">
    <property type="term" value="C:plasma membrane"/>
    <property type="evidence" value="ECO:0007669"/>
    <property type="project" value="UniProtKB-SubCell"/>
</dbReference>
<dbReference type="GO" id="GO:0003779">
    <property type="term" value="F:actin binding"/>
    <property type="evidence" value="ECO:0007669"/>
    <property type="project" value="UniProtKB-KW"/>
</dbReference>
<dbReference type="GO" id="GO:0005509">
    <property type="term" value="F:calcium ion binding"/>
    <property type="evidence" value="ECO:0007669"/>
    <property type="project" value="InterPro"/>
</dbReference>
<dbReference type="GO" id="GO:0030674">
    <property type="term" value="F:protein-macromolecule adaptor activity"/>
    <property type="evidence" value="ECO:0007669"/>
    <property type="project" value="EnsemblFungi"/>
</dbReference>
<dbReference type="GO" id="GO:0007015">
    <property type="term" value="P:actin filament organization"/>
    <property type="evidence" value="ECO:0007669"/>
    <property type="project" value="InterPro"/>
</dbReference>
<dbReference type="GO" id="GO:0030476">
    <property type="term" value="P:ascospore wall assembly"/>
    <property type="evidence" value="ECO:0007669"/>
    <property type="project" value="EnsemblFungi"/>
</dbReference>
<dbReference type="GO" id="GO:0006897">
    <property type="term" value="P:endocytosis"/>
    <property type="evidence" value="ECO:0007669"/>
    <property type="project" value="UniProtKB-KW"/>
</dbReference>
<dbReference type="GO" id="GO:0016197">
    <property type="term" value="P:endosomal transport"/>
    <property type="evidence" value="ECO:0007669"/>
    <property type="project" value="TreeGrafter"/>
</dbReference>
<dbReference type="GO" id="GO:0061709">
    <property type="term" value="P:reticulophagy"/>
    <property type="evidence" value="ECO:0007669"/>
    <property type="project" value="EnsemblFungi"/>
</dbReference>
<dbReference type="CDD" id="cd00052">
    <property type="entry name" value="EH"/>
    <property type="match status" value="1"/>
</dbReference>
<dbReference type="Gene3D" id="1.10.238.10">
    <property type="entry name" value="EF-hand"/>
    <property type="match status" value="2"/>
</dbReference>
<dbReference type="InterPro" id="IPR011992">
    <property type="entry name" value="EF-hand-dom_pair"/>
</dbReference>
<dbReference type="InterPro" id="IPR018247">
    <property type="entry name" value="EF_Hand_1_Ca_BS"/>
</dbReference>
<dbReference type="InterPro" id="IPR002048">
    <property type="entry name" value="EF_hand_dom"/>
</dbReference>
<dbReference type="InterPro" id="IPR000261">
    <property type="entry name" value="EH_dom"/>
</dbReference>
<dbReference type="InterPro" id="IPR025604">
    <property type="entry name" value="End3"/>
</dbReference>
<dbReference type="PANTHER" id="PTHR11216">
    <property type="entry name" value="EH DOMAIN"/>
    <property type="match status" value="1"/>
</dbReference>
<dbReference type="Pfam" id="PF12763">
    <property type="entry name" value="EH"/>
    <property type="match status" value="1"/>
</dbReference>
<dbReference type="Pfam" id="PF12761">
    <property type="entry name" value="End3"/>
    <property type="match status" value="1"/>
</dbReference>
<dbReference type="SMART" id="SM00054">
    <property type="entry name" value="EFh"/>
    <property type="match status" value="1"/>
</dbReference>
<dbReference type="SMART" id="SM00027">
    <property type="entry name" value="EH"/>
    <property type="match status" value="2"/>
</dbReference>
<dbReference type="SUPFAM" id="SSF47473">
    <property type="entry name" value="EF-hand"/>
    <property type="match status" value="2"/>
</dbReference>
<dbReference type="PROSITE" id="PS00018">
    <property type="entry name" value="EF_HAND_1"/>
    <property type="match status" value="1"/>
</dbReference>
<dbReference type="PROSITE" id="PS50222">
    <property type="entry name" value="EF_HAND_2"/>
    <property type="match status" value="1"/>
</dbReference>
<dbReference type="PROSITE" id="PS50031">
    <property type="entry name" value="EH"/>
    <property type="match status" value="2"/>
</dbReference>